<feature type="chain" id="PRO_1000202150" description="Aspartate--tRNA(Asp/Asn) ligase">
    <location>
        <begin position="1"/>
        <end position="601"/>
    </location>
</feature>
<feature type="region of interest" description="Aspartate" evidence="1">
    <location>
        <begin position="197"/>
        <end position="200"/>
    </location>
</feature>
<feature type="region of interest" description="Disordered" evidence="2">
    <location>
        <begin position="566"/>
        <end position="601"/>
    </location>
</feature>
<feature type="compositionally biased region" description="Acidic residues" evidence="2">
    <location>
        <begin position="592"/>
        <end position="601"/>
    </location>
</feature>
<feature type="binding site" evidence="1">
    <location>
        <position position="173"/>
    </location>
    <ligand>
        <name>L-aspartate</name>
        <dbReference type="ChEBI" id="CHEBI:29991"/>
    </ligand>
</feature>
<feature type="binding site" evidence="1">
    <location>
        <begin position="219"/>
        <end position="221"/>
    </location>
    <ligand>
        <name>ATP</name>
        <dbReference type="ChEBI" id="CHEBI:30616"/>
    </ligand>
</feature>
<feature type="binding site" evidence="1">
    <location>
        <position position="219"/>
    </location>
    <ligand>
        <name>L-aspartate</name>
        <dbReference type="ChEBI" id="CHEBI:29991"/>
    </ligand>
</feature>
<feature type="binding site" evidence="1">
    <location>
        <position position="228"/>
    </location>
    <ligand>
        <name>ATP</name>
        <dbReference type="ChEBI" id="CHEBI:30616"/>
    </ligand>
</feature>
<feature type="binding site" evidence="1">
    <location>
        <position position="456"/>
    </location>
    <ligand>
        <name>L-aspartate</name>
        <dbReference type="ChEBI" id="CHEBI:29991"/>
    </ligand>
</feature>
<feature type="binding site" evidence="1">
    <location>
        <position position="490"/>
    </location>
    <ligand>
        <name>ATP</name>
        <dbReference type="ChEBI" id="CHEBI:30616"/>
    </ligand>
</feature>
<feature type="binding site" evidence="1">
    <location>
        <position position="497"/>
    </location>
    <ligand>
        <name>L-aspartate</name>
        <dbReference type="ChEBI" id="CHEBI:29991"/>
    </ligand>
</feature>
<feature type="binding site" evidence="1">
    <location>
        <begin position="542"/>
        <end position="545"/>
    </location>
    <ligand>
        <name>ATP</name>
        <dbReference type="ChEBI" id="CHEBI:30616"/>
    </ligand>
</feature>
<feature type="site" description="Important for tRNA non-discrimination" evidence="1">
    <location>
        <position position="31"/>
    </location>
</feature>
<feature type="site" description="Important for tRNA non-discrimination" evidence="1">
    <location>
        <position position="77"/>
    </location>
</feature>
<reference key="1">
    <citation type="journal article" date="2009" name="Stand. Genomic Sci.">
        <title>Complete genome sequence of Beutenbergia cavernae type strain (HKI 0122).</title>
        <authorList>
            <person name="Land M."/>
            <person name="Pukall R."/>
            <person name="Abt B."/>
            <person name="Goker M."/>
            <person name="Rohde M."/>
            <person name="Glavina Del Rio T."/>
            <person name="Tice H."/>
            <person name="Copeland A."/>
            <person name="Cheng J.F."/>
            <person name="Lucas S."/>
            <person name="Chen F."/>
            <person name="Nolan M."/>
            <person name="Bruce D."/>
            <person name="Goodwin L."/>
            <person name="Pitluck S."/>
            <person name="Ivanova N."/>
            <person name="Mavromatis K."/>
            <person name="Ovchinnikova G."/>
            <person name="Pati A."/>
            <person name="Chen A."/>
            <person name="Palaniappan K."/>
            <person name="Hauser L."/>
            <person name="Chang Y.J."/>
            <person name="Jefferies C.C."/>
            <person name="Saunders E."/>
            <person name="Brettin T."/>
            <person name="Detter J.C."/>
            <person name="Han C."/>
            <person name="Chain P."/>
            <person name="Bristow J."/>
            <person name="Eisen J.A."/>
            <person name="Markowitz V."/>
            <person name="Hugenholtz P."/>
            <person name="Kyrpides N.C."/>
            <person name="Klenk H.P."/>
            <person name="Lapidus A."/>
        </authorList>
    </citation>
    <scope>NUCLEOTIDE SEQUENCE [LARGE SCALE GENOMIC DNA]</scope>
    <source>
        <strain>ATCC BAA-8 / DSM 12333 / CCUG 43141 / JCM 11478 / NBRC 16432 / NCIMB 13614 / HKI 0122</strain>
    </source>
</reference>
<comment type="function">
    <text evidence="1">Aspartyl-tRNA synthetase with relaxed tRNA specificity since it is able to aspartylate not only its cognate tRNA(Asp) but also tRNA(Asn). Reaction proceeds in two steps: L-aspartate is first activated by ATP to form Asp-AMP and then transferred to the acceptor end of tRNA(Asp/Asn).</text>
</comment>
<comment type="catalytic activity">
    <reaction evidence="1">
        <text>tRNA(Asx) + L-aspartate + ATP = L-aspartyl-tRNA(Asx) + AMP + diphosphate</text>
        <dbReference type="Rhea" id="RHEA:18349"/>
        <dbReference type="Rhea" id="RHEA-COMP:9710"/>
        <dbReference type="Rhea" id="RHEA-COMP:9711"/>
        <dbReference type="ChEBI" id="CHEBI:29991"/>
        <dbReference type="ChEBI" id="CHEBI:30616"/>
        <dbReference type="ChEBI" id="CHEBI:33019"/>
        <dbReference type="ChEBI" id="CHEBI:78442"/>
        <dbReference type="ChEBI" id="CHEBI:78516"/>
        <dbReference type="ChEBI" id="CHEBI:456215"/>
        <dbReference type="EC" id="6.1.1.23"/>
    </reaction>
</comment>
<comment type="subunit">
    <text evidence="1">Homodimer.</text>
</comment>
<comment type="subcellular location">
    <subcellularLocation>
        <location evidence="1">Cytoplasm</location>
    </subcellularLocation>
</comment>
<comment type="similarity">
    <text evidence="1">Belongs to the class-II aminoacyl-tRNA synthetase family. Type 1 subfamily.</text>
</comment>
<gene>
    <name evidence="1" type="primary">aspS</name>
    <name type="ordered locus">Bcav_2007</name>
</gene>
<sequence length="601" mass="65423">MLRTSPAGSLRAEHTAQVVTLTGWVDRRRDHGGVAFIDLRDASGIAQVVIRDEAVAHPLRNEFVLQVTGEVSRRPAGNENPNLPTGEIEVVASDVVVLNSAAALPFQVSTALADTEAIGEEVRLKYRYLDLRRPAPARAIRLRAKANQAARRVLDAEEFVEIETPTLTRSTPEGARDFLVPARLAPGSWYALPQSPQLFKQLLMVAGMERYYQIARCYRDEDFRADRQPEFTQLDVEMSFVEQDDVIALAEKVLVALWELIGFTIPTPIPRMTFDDAMRLYGTDKPDLRFGNPIVELTSYFADTPFRVFQSEYVGAVVMAGGASLPRRQFDAWQEWAKQRGARGLAYVTFPEDGSDLGGPVAKNLSDAERAGLREATGAAPGDAVFFAAGATTPSRALLGAARQEIAKRTGLIDSADQEGAWAFVWVVDAPLFKPTGDAADDGDVALGHSAWTAVHHAFTSPTPEWIDTFEQDPGSALSNAYDIVCNGNEIGGGSIRIHRRDVQERVFQVMGIDAAEAQEKFGFLLDAFSYGAPPHGGIAFGWDRILALLTGSESIREVIAFPKSGGGYDPLTQAPAPITAEQRRESGVDAVPDDETAPQA</sequence>
<organism>
    <name type="scientific">Beutenbergia cavernae (strain ATCC BAA-8 / DSM 12333 / CCUG 43141 / JCM 11478 / NBRC 16432 / NCIMB 13614 / HKI 0122)</name>
    <dbReference type="NCBI Taxonomy" id="471853"/>
    <lineage>
        <taxon>Bacteria</taxon>
        <taxon>Bacillati</taxon>
        <taxon>Actinomycetota</taxon>
        <taxon>Actinomycetes</taxon>
        <taxon>Micrococcales</taxon>
        <taxon>Beutenbergiaceae</taxon>
        <taxon>Beutenbergia</taxon>
    </lineage>
</organism>
<keyword id="KW-0030">Aminoacyl-tRNA synthetase</keyword>
<keyword id="KW-0067">ATP-binding</keyword>
<keyword id="KW-0963">Cytoplasm</keyword>
<keyword id="KW-0436">Ligase</keyword>
<keyword id="KW-0547">Nucleotide-binding</keyword>
<keyword id="KW-0648">Protein biosynthesis</keyword>
<keyword id="KW-1185">Reference proteome</keyword>
<accession>C5C5S1</accession>
<name>SYDND_BEUC1</name>
<proteinExistence type="inferred from homology"/>
<dbReference type="EC" id="6.1.1.23" evidence="1"/>
<dbReference type="EMBL" id="CP001618">
    <property type="protein sequence ID" value="ACQ80262.1"/>
    <property type="molecule type" value="Genomic_DNA"/>
</dbReference>
<dbReference type="RefSeq" id="WP_015882502.1">
    <property type="nucleotide sequence ID" value="NC_012669.1"/>
</dbReference>
<dbReference type="SMR" id="C5C5S1"/>
<dbReference type="STRING" id="471853.Bcav_2007"/>
<dbReference type="KEGG" id="bcv:Bcav_2007"/>
<dbReference type="eggNOG" id="COG0173">
    <property type="taxonomic scope" value="Bacteria"/>
</dbReference>
<dbReference type="HOGENOM" id="CLU_014330_3_2_11"/>
<dbReference type="OrthoDB" id="9802326at2"/>
<dbReference type="Proteomes" id="UP000007962">
    <property type="component" value="Chromosome"/>
</dbReference>
<dbReference type="GO" id="GO:0005737">
    <property type="term" value="C:cytoplasm"/>
    <property type="evidence" value="ECO:0007669"/>
    <property type="project" value="UniProtKB-SubCell"/>
</dbReference>
<dbReference type="GO" id="GO:0004815">
    <property type="term" value="F:aspartate-tRNA ligase activity"/>
    <property type="evidence" value="ECO:0007669"/>
    <property type="project" value="UniProtKB-UniRule"/>
</dbReference>
<dbReference type="GO" id="GO:0050560">
    <property type="term" value="F:aspartate-tRNA(Asn) ligase activity"/>
    <property type="evidence" value="ECO:0007669"/>
    <property type="project" value="UniProtKB-EC"/>
</dbReference>
<dbReference type="GO" id="GO:0005524">
    <property type="term" value="F:ATP binding"/>
    <property type="evidence" value="ECO:0007669"/>
    <property type="project" value="UniProtKB-UniRule"/>
</dbReference>
<dbReference type="GO" id="GO:0003676">
    <property type="term" value="F:nucleic acid binding"/>
    <property type="evidence" value="ECO:0007669"/>
    <property type="project" value="InterPro"/>
</dbReference>
<dbReference type="GO" id="GO:0006422">
    <property type="term" value="P:aspartyl-tRNA aminoacylation"/>
    <property type="evidence" value="ECO:0007669"/>
    <property type="project" value="UniProtKB-UniRule"/>
</dbReference>
<dbReference type="CDD" id="cd00777">
    <property type="entry name" value="AspRS_core"/>
    <property type="match status" value="1"/>
</dbReference>
<dbReference type="CDD" id="cd04317">
    <property type="entry name" value="EcAspRS_like_N"/>
    <property type="match status" value="1"/>
</dbReference>
<dbReference type="Gene3D" id="3.30.930.10">
    <property type="entry name" value="Bira Bifunctional Protein, Domain 2"/>
    <property type="match status" value="1"/>
</dbReference>
<dbReference type="Gene3D" id="3.30.1360.30">
    <property type="entry name" value="GAD-like domain"/>
    <property type="match status" value="1"/>
</dbReference>
<dbReference type="Gene3D" id="2.40.50.140">
    <property type="entry name" value="Nucleic acid-binding proteins"/>
    <property type="match status" value="1"/>
</dbReference>
<dbReference type="HAMAP" id="MF_00044">
    <property type="entry name" value="Asp_tRNA_synth_type1"/>
    <property type="match status" value="1"/>
</dbReference>
<dbReference type="InterPro" id="IPR004364">
    <property type="entry name" value="Aa-tRNA-synt_II"/>
</dbReference>
<dbReference type="InterPro" id="IPR006195">
    <property type="entry name" value="aa-tRNA-synth_II"/>
</dbReference>
<dbReference type="InterPro" id="IPR045864">
    <property type="entry name" value="aa-tRNA-synth_II/BPL/LPL"/>
</dbReference>
<dbReference type="InterPro" id="IPR004524">
    <property type="entry name" value="Asp-tRNA-ligase_1"/>
</dbReference>
<dbReference type="InterPro" id="IPR047089">
    <property type="entry name" value="Asp-tRNA-ligase_1_N"/>
</dbReference>
<dbReference type="InterPro" id="IPR002312">
    <property type="entry name" value="Asp/Asn-tRNA-synth_IIb"/>
</dbReference>
<dbReference type="InterPro" id="IPR047090">
    <property type="entry name" value="AspRS_core"/>
</dbReference>
<dbReference type="InterPro" id="IPR004115">
    <property type="entry name" value="GAD-like_sf"/>
</dbReference>
<dbReference type="InterPro" id="IPR029351">
    <property type="entry name" value="GAD_dom"/>
</dbReference>
<dbReference type="InterPro" id="IPR012340">
    <property type="entry name" value="NA-bd_OB-fold"/>
</dbReference>
<dbReference type="InterPro" id="IPR004365">
    <property type="entry name" value="NA-bd_OB_tRNA"/>
</dbReference>
<dbReference type="NCBIfam" id="TIGR00459">
    <property type="entry name" value="aspS_bact"/>
    <property type="match status" value="1"/>
</dbReference>
<dbReference type="NCBIfam" id="NF001750">
    <property type="entry name" value="PRK00476.1"/>
    <property type="match status" value="1"/>
</dbReference>
<dbReference type="PANTHER" id="PTHR22594:SF5">
    <property type="entry name" value="ASPARTATE--TRNA LIGASE, MITOCHONDRIAL"/>
    <property type="match status" value="1"/>
</dbReference>
<dbReference type="PANTHER" id="PTHR22594">
    <property type="entry name" value="ASPARTYL/LYSYL-TRNA SYNTHETASE"/>
    <property type="match status" value="1"/>
</dbReference>
<dbReference type="Pfam" id="PF02938">
    <property type="entry name" value="GAD"/>
    <property type="match status" value="1"/>
</dbReference>
<dbReference type="Pfam" id="PF00152">
    <property type="entry name" value="tRNA-synt_2"/>
    <property type="match status" value="1"/>
</dbReference>
<dbReference type="Pfam" id="PF01336">
    <property type="entry name" value="tRNA_anti-codon"/>
    <property type="match status" value="1"/>
</dbReference>
<dbReference type="PRINTS" id="PR01042">
    <property type="entry name" value="TRNASYNTHASP"/>
</dbReference>
<dbReference type="SUPFAM" id="SSF55681">
    <property type="entry name" value="Class II aaRS and biotin synthetases"/>
    <property type="match status" value="1"/>
</dbReference>
<dbReference type="SUPFAM" id="SSF55261">
    <property type="entry name" value="GAD domain-like"/>
    <property type="match status" value="1"/>
</dbReference>
<dbReference type="SUPFAM" id="SSF50249">
    <property type="entry name" value="Nucleic acid-binding proteins"/>
    <property type="match status" value="1"/>
</dbReference>
<dbReference type="PROSITE" id="PS50862">
    <property type="entry name" value="AA_TRNA_LIGASE_II"/>
    <property type="match status" value="1"/>
</dbReference>
<protein>
    <recommendedName>
        <fullName evidence="1">Aspartate--tRNA(Asp/Asn) ligase</fullName>
        <ecNumber evidence="1">6.1.1.23</ecNumber>
    </recommendedName>
    <alternativeName>
        <fullName evidence="1">Aspartyl-tRNA synthetase</fullName>
        <shortName evidence="1">AspRS</shortName>
    </alternativeName>
    <alternativeName>
        <fullName evidence="1">Non-discriminating aspartyl-tRNA synthetase</fullName>
        <shortName evidence="1">ND-AspRS</shortName>
    </alternativeName>
</protein>
<evidence type="ECO:0000255" key="1">
    <source>
        <dbReference type="HAMAP-Rule" id="MF_00044"/>
    </source>
</evidence>
<evidence type="ECO:0000256" key="2">
    <source>
        <dbReference type="SAM" id="MobiDB-lite"/>
    </source>
</evidence>